<sequence>MKERLFIISQYLLPHHLLSRLAGCIAECRVRWFKNAFTTWFAKRYQVDMSQALVEDVTAYEHFNAFFTRALKDGARPLDQTPGAILSPADGAISQLGPIEHGRIFQAKGHSFSVLELLGGDAANAAPFMGGEFATVYLSPKDYHRVHMPLAGTLREMVYIPGRIFSVNQTTAENVPELFARNERVACIFDTERGPMAVVLVGAMIVASIETVWAGLVTPPKRELKTFRYDEAARAPIHLEKGAELGRFKLGSTAIVLFGPDQVKWVEELKAGSPVQMGQALAQSNA</sequence>
<evidence type="ECO:0000255" key="1">
    <source>
        <dbReference type="HAMAP-Rule" id="MF_00662"/>
    </source>
</evidence>
<organism>
    <name type="scientific">Pseudomonas fluorescens (strain Pf0-1)</name>
    <dbReference type="NCBI Taxonomy" id="205922"/>
    <lineage>
        <taxon>Bacteria</taxon>
        <taxon>Pseudomonadati</taxon>
        <taxon>Pseudomonadota</taxon>
        <taxon>Gammaproteobacteria</taxon>
        <taxon>Pseudomonadales</taxon>
        <taxon>Pseudomonadaceae</taxon>
        <taxon>Pseudomonas</taxon>
    </lineage>
</organism>
<keyword id="KW-1003">Cell membrane</keyword>
<keyword id="KW-0210">Decarboxylase</keyword>
<keyword id="KW-0444">Lipid biosynthesis</keyword>
<keyword id="KW-0443">Lipid metabolism</keyword>
<keyword id="KW-0456">Lyase</keyword>
<keyword id="KW-0472">Membrane</keyword>
<keyword id="KW-0594">Phospholipid biosynthesis</keyword>
<keyword id="KW-1208">Phospholipid metabolism</keyword>
<keyword id="KW-0670">Pyruvate</keyword>
<keyword id="KW-0865">Zymogen</keyword>
<name>PSD_PSEPF</name>
<proteinExistence type="inferred from homology"/>
<accession>Q3KJ03</accession>
<gene>
    <name evidence="1" type="primary">psd</name>
    <name type="ordered locus">Pfl01_0509</name>
</gene>
<dbReference type="EC" id="4.1.1.65" evidence="1"/>
<dbReference type="EMBL" id="CP000094">
    <property type="protein sequence ID" value="ABA72253.1"/>
    <property type="molecule type" value="Genomic_DNA"/>
</dbReference>
<dbReference type="SMR" id="Q3KJ03"/>
<dbReference type="KEGG" id="pfo:Pfl01_0509"/>
<dbReference type="eggNOG" id="COG0688">
    <property type="taxonomic scope" value="Bacteria"/>
</dbReference>
<dbReference type="HOGENOM" id="CLU_029061_4_1_6"/>
<dbReference type="UniPathway" id="UPA00558">
    <property type="reaction ID" value="UER00616"/>
</dbReference>
<dbReference type="Proteomes" id="UP000002704">
    <property type="component" value="Chromosome"/>
</dbReference>
<dbReference type="GO" id="GO:0005886">
    <property type="term" value="C:plasma membrane"/>
    <property type="evidence" value="ECO:0007669"/>
    <property type="project" value="UniProtKB-SubCell"/>
</dbReference>
<dbReference type="GO" id="GO:0004609">
    <property type="term" value="F:phosphatidylserine decarboxylase activity"/>
    <property type="evidence" value="ECO:0007669"/>
    <property type="project" value="UniProtKB-UniRule"/>
</dbReference>
<dbReference type="GO" id="GO:0006646">
    <property type="term" value="P:phosphatidylethanolamine biosynthetic process"/>
    <property type="evidence" value="ECO:0007669"/>
    <property type="project" value="UniProtKB-UniRule"/>
</dbReference>
<dbReference type="HAMAP" id="MF_00662">
    <property type="entry name" value="PS_decarb_PSD_B_type1"/>
    <property type="match status" value="1"/>
</dbReference>
<dbReference type="InterPro" id="IPR003817">
    <property type="entry name" value="PS_Dcarbxylase"/>
</dbReference>
<dbReference type="InterPro" id="IPR033177">
    <property type="entry name" value="PSD-B"/>
</dbReference>
<dbReference type="InterPro" id="IPR033178">
    <property type="entry name" value="PSD_type1_pro"/>
</dbReference>
<dbReference type="NCBIfam" id="TIGR00163">
    <property type="entry name" value="PS_decarb"/>
    <property type="match status" value="1"/>
</dbReference>
<dbReference type="PANTHER" id="PTHR10067">
    <property type="entry name" value="PHOSPHATIDYLSERINE DECARBOXYLASE"/>
    <property type="match status" value="1"/>
</dbReference>
<dbReference type="PANTHER" id="PTHR10067:SF6">
    <property type="entry name" value="PHOSPHATIDYLSERINE DECARBOXYLASE PROENZYME, MITOCHONDRIAL"/>
    <property type="match status" value="1"/>
</dbReference>
<dbReference type="Pfam" id="PF02666">
    <property type="entry name" value="PS_Dcarbxylase"/>
    <property type="match status" value="1"/>
</dbReference>
<protein>
    <recommendedName>
        <fullName evidence="1">Phosphatidylserine decarboxylase proenzyme</fullName>
        <ecNumber evidence="1">4.1.1.65</ecNumber>
    </recommendedName>
    <component>
        <recommendedName>
            <fullName evidence="1">Phosphatidylserine decarboxylase alpha chain</fullName>
        </recommendedName>
    </component>
    <component>
        <recommendedName>
            <fullName evidence="1">Phosphatidylserine decarboxylase beta chain</fullName>
        </recommendedName>
    </component>
</protein>
<comment type="function">
    <text evidence="1">Catalyzes the formation of phosphatidylethanolamine (PtdEtn) from phosphatidylserine (PtdSer).</text>
</comment>
<comment type="catalytic activity">
    <reaction evidence="1">
        <text>a 1,2-diacyl-sn-glycero-3-phospho-L-serine + H(+) = a 1,2-diacyl-sn-glycero-3-phosphoethanolamine + CO2</text>
        <dbReference type="Rhea" id="RHEA:20828"/>
        <dbReference type="ChEBI" id="CHEBI:15378"/>
        <dbReference type="ChEBI" id="CHEBI:16526"/>
        <dbReference type="ChEBI" id="CHEBI:57262"/>
        <dbReference type="ChEBI" id="CHEBI:64612"/>
        <dbReference type="EC" id="4.1.1.65"/>
    </reaction>
</comment>
<comment type="cofactor">
    <cofactor evidence="1">
        <name>pyruvate</name>
        <dbReference type="ChEBI" id="CHEBI:15361"/>
    </cofactor>
    <text evidence="1">Binds 1 pyruvoyl group covalently per subunit.</text>
</comment>
<comment type="pathway">
    <text evidence="1">Phospholipid metabolism; phosphatidylethanolamine biosynthesis; phosphatidylethanolamine from CDP-diacylglycerol: step 2/2.</text>
</comment>
<comment type="subunit">
    <text evidence="1">Heterodimer of a large membrane-associated beta subunit and a small pyruvoyl-containing alpha subunit.</text>
</comment>
<comment type="subcellular location">
    <subcellularLocation>
        <location evidence="1">Cell membrane</location>
        <topology evidence="1">Peripheral membrane protein</topology>
    </subcellularLocation>
</comment>
<comment type="PTM">
    <text evidence="1">Is synthesized initially as an inactive proenzyme. Formation of the active enzyme involves a self-maturation process in which the active site pyruvoyl group is generated from an internal serine residue via an autocatalytic post-translational modification. Two non-identical subunits are generated from the proenzyme in this reaction, and the pyruvate is formed at the N-terminus of the alpha chain, which is derived from the carboxyl end of the proenzyme. The autoendoproteolytic cleavage occurs by a canonical serine protease mechanism, in which the side chain hydroxyl group of the serine supplies its oxygen atom to form the C-terminus of the beta chain, while the remainder of the serine residue undergoes an oxidative deamination to produce ammonia and the pyruvoyl prosthetic group on the alpha chain. During this reaction, the Ser that is part of the protease active site of the proenzyme becomes the pyruvoyl prosthetic group, which constitutes an essential element of the active site of the mature decarboxylase.</text>
</comment>
<comment type="similarity">
    <text evidence="1">Belongs to the phosphatidylserine decarboxylase family. PSD-B subfamily. Prokaryotic type I sub-subfamily.</text>
</comment>
<reference key="1">
    <citation type="journal article" date="2009" name="Genome Biol.">
        <title>Genomic and genetic analyses of diversity and plant interactions of Pseudomonas fluorescens.</title>
        <authorList>
            <person name="Silby M.W."/>
            <person name="Cerdeno-Tarraga A.M."/>
            <person name="Vernikos G.S."/>
            <person name="Giddens S.R."/>
            <person name="Jackson R.W."/>
            <person name="Preston G.M."/>
            <person name="Zhang X.-X."/>
            <person name="Moon C.D."/>
            <person name="Gehrig S.M."/>
            <person name="Godfrey S.A.C."/>
            <person name="Knight C.G."/>
            <person name="Malone J.G."/>
            <person name="Robinson Z."/>
            <person name="Spiers A.J."/>
            <person name="Harris S."/>
            <person name="Challis G.L."/>
            <person name="Yaxley A.M."/>
            <person name="Harris D."/>
            <person name="Seeger K."/>
            <person name="Murphy L."/>
            <person name="Rutter S."/>
            <person name="Squares R."/>
            <person name="Quail M.A."/>
            <person name="Saunders E."/>
            <person name="Mavromatis K."/>
            <person name="Brettin T.S."/>
            <person name="Bentley S.D."/>
            <person name="Hothersall J."/>
            <person name="Stephens E."/>
            <person name="Thomas C.M."/>
            <person name="Parkhill J."/>
            <person name="Levy S.B."/>
            <person name="Rainey P.B."/>
            <person name="Thomson N.R."/>
        </authorList>
    </citation>
    <scope>NUCLEOTIDE SEQUENCE [LARGE SCALE GENOMIC DNA]</scope>
    <source>
        <strain>Pf0-1</strain>
    </source>
</reference>
<feature type="chain" id="PRO_0000262139" description="Phosphatidylserine decarboxylase beta chain" evidence="1">
    <location>
        <begin position="1"/>
        <end position="251"/>
    </location>
</feature>
<feature type="chain" id="PRO_0000262140" description="Phosphatidylserine decarboxylase alpha chain" evidence="1">
    <location>
        <begin position="252"/>
        <end position="286"/>
    </location>
</feature>
<feature type="active site" description="Charge relay system; for autoendoproteolytic cleavage activity" evidence="1">
    <location>
        <position position="90"/>
    </location>
</feature>
<feature type="active site" description="Charge relay system; for autoendoproteolytic cleavage activity" evidence="1">
    <location>
        <position position="147"/>
    </location>
</feature>
<feature type="active site" description="Charge relay system; for autoendoproteolytic cleavage activity" evidence="1">
    <location>
        <position position="252"/>
    </location>
</feature>
<feature type="active site" description="Schiff-base intermediate with substrate; via pyruvic acid; for decarboxylase activity" evidence="1">
    <location>
        <position position="252"/>
    </location>
</feature>
<feature type="site" description="Cleavage (non-hydrolytic); by autocatalysis" evidence="1">
    <location>
        <begin position="251"/>
        <end position="252"/>
    </location>
</feature>
<feature type="modified residue" description="Pyruvic acid (Ser); by autocatalysis" evidence="1">
    <location>
        <position position="252"/>
    </location>
</feature>